<accession>Q9BEA1</accession>
<evidence type="ECO:0000250" key="1"/>
<evidence type="ECO:0000250" key="2">
    <source>
        <dbReference type="UniProtKB" id="P01375"/>
    </source>
</evidence>
<evidence type="ECO:0000250" key="3">
    <source>
        <dbReference type="UniProtKB" id="P06804"/>
    </source>
</evidence>
<evidence type="ECO:0000255" key="4"/>
<evidence type="ECO:0000255" key="5">
    <source>
        <dbReference type="PROSITE-ProRule" id="PRU01387"/>
    </source>
</evidence>
<evidence type="ECO:0000305" key="6"/>
<comment type="function">
    <text evidence="2 3">Cytokine that binds to TNFRSF1A/TNFR1 and TNFRSF1B/TNFBR. It is mainly secreted by macrophages and can induce cell death of certain tumor cell lines. It is potent pyrogen causing fever by direct action or by stimulation of interleukin-1 secretion and is implicated in the induction of cachexia, Under certain conditions it can stimulate cell proliferation and induce cell differentiation (By similarity). Induces insulin resistance in adipocytes via inhibition of insulin-induced IRS1 tyrosine phosphorylation and insulin-induced glucose uptake. Induces GKAP42 protein degradation in adipocytes which is partially responsible for TNF-induced insulin resistance (By similarity). Plays a role in angiogenesis by inducing VEGF production synergistically with IL1B and IL6 (By similarity).</text>
</comment>
<comment type="function">
    <text evidence="2">The TNF intracellular domain (ICD) form induces IL12 production in dendritic cells.</text>
</comment>
<comment type="subunit">
    <text evidence="1">Homotrimer. Interacts with SPPL2B (By similarity).</text>
</comment>
<comment type="subcellular location">
    <subcellularLocation>
        <location evidence="1">Cell membrane</location>
        <topology evidence="1">Single-pass type II membrane protein</topology>
    </subcellularLocation>
</comment>
<comment type="subcellular location">
    <molecule>Tumor necrosis factor, membrane form</molecule>
    <subcellularLocation>
        <location evidence="1">Membrane</location>
        <topology evidence="1">Single-pass type II membrane protein</topology>
    </subcellularLocation>
</comment>
<comment type="subcellular location">
    <molecule>Tumor necrosis factor, soluble form</molecule>
    <subcellularLocation>
        <location evidence="1">Secreted</location>
    </subcellularLocation>
</comment>
<comment type="subcellular location">
    <molecule>C-domain 1</molecule>
    <subcellularLocation>
        <location evidence="1">Secreted</location>
    </subcellularLocation>
</comment>
<comment type="subcellular location">
    <molecule>C-domain 2</molecule>
    <subcellularLocation>
        <location evidence="1">Secreted</location>
    </subcellularLocation>
</comment>
<comment type="PTM">
    <text evidence="1">The soluble form derives from the membrane form by proteolytic processing. The membrane-bound form is further proteolytically processed by SPPL2A or SPPL2B through regulated intramembrane proteolysis producing TNF intracellular domains (ICD1 and ICD2) released in the cytosol and TNF C-domain 1 and C-domain 2 secreted into the extracellular space (By similarity).</text>
</comment>
<comment type="PTM">
    <text evidence="1">The membrane form, but not the soluble form, is phosphorylated on serine residues. Dephosphorylation of the membrane form occurs by binding to soluble TNFRSF1A/TNFR1 (By similarity).</text>
</comment>
<comment type="PTM">
    <text evidence="1">O-glycosylated; glycans contain galactose, N-acetylgalactosamine and N-acetylneuraminic acid.</text>
</comment>
<comment type="PTM">
    <molecule>Tumor necrosis factor, soluble form</molecule>
    <text evidence="2">The soluble form is demyristoylated by SIRT6, promoting its secretion.</text>
</comment>
<comment type="similarity">
    <text evidence="6">Belongs to the tumor necrosis factor family.</text>
</comment>
<dbReference type="EMBL" id="AB049358">
    <property type="protein sequence ID" value="BAB39855.1"/>
    <property type="molecule type" value="mRNA"/>
</dbReference>
<dbReference type="RefSeq" id="NP_001267544.1">
    <property type="nucleotide sequence ID" value="NM_001280615.1"/>
</dbReference>
<dbReference type="SMR" id="Q9BEA1"/>
<dbReference type="FunCoup" id="Q9BEA1">
    <property type="interactions" value="801"/>
</dbReference>
<dbReference type="STRING" id="9739.ENSTTRP00000013353"/>
<dbReference type="GlyCosmos" id="Q9BEA1">
    <property type="glycosylation" value="2 sites, No reported glycans"/>
</dbReference>
<dbReference type="GeneID" id="101318178"/>
<dbReference type="CTD" id="7124"/>
<dbReference type="HOGENOM" id="CLU_070352_3_1_1"/>
<dbReference type="InParanoid" id="Q9BEA1"/>
<dbReference type="OrthoDB" id="9940698at2759"/>
<dbReference type="Proteomes" id="UP000245320">
    <property type="component" value="Chromosome 10"/>
</dbReference>
<dbReference type="GO" id="GO:0009986">
    <property type="term" value="C:cell surface"/>
    <property type="evidence" value="ECO:0007669"/>
    <property type="project" value="TreeGrafter"/>
</dbReference>
<dbReference type="GO" id="GO:0005615">
    <property type="term" value="C:extracellular space"/>
    <property type="evidence" value="ECO:0007669"/>
    <property type="project" value="UniProtKB-KW"/>
</dbReference>
<dbReference type="GO" id="GO:0005886">
    <property type="term" value="C:plasma membrane"/>
    <property type="evidence" value="ECO:0007669"/>
    <property type="project" value="UniProtKB-SubCell"/>
</dbReference>
<dbReference type="GO" id="GO:0005125">
    <property type="term" value="F:cytokine activity"/>
    <property type="evidence" value="ECO:0007669"/>
    <property type="project" value="UniProtKB-KW"/>
</dbReference>
<dbReference type="GO" id="GO:0005164">
    <property type="term" value="F:tumor necrosis factor receptor binding"/>
    <property type="evidence" value="ECO:0007669"/>
    <property type="project" value="InterPro"/>
</dbReference>
<dbReference type="GO" id="GO:0008625">
    <property type="term" value="P:extrinsic apoptotic signaling pathway via death domain receptors"/>
    <property type="evidence" value="ECO:0007669"/>
    <property type="project" value="TreeGrafter"/>
</dbReference>
<dbReference type="GO" id="GO:0006955">
    <property type="term" value="P:immune response"/>
    <property type="evidence" value="ECO:0007669"/>
    <property type="project" value="InterPro"/>
</dbReference>
<dbReference type="GO" id="GO:0097527">
    <property type="term" value="P:necroptotic signaling pathway"/>
    <property type="evidence" value="ECO:0000250"/>
    <property type="project" value="CAFA"/>
</dbReference>
<dbReference type="GO" id="GO:0043123">
    <property type="term" value="P:positive regulation of canonical NF-kappaB signal transduction"/>
    <property type="evidence" value="ECO:0007669"/>
    <property type="project" value="TreeGrafter"/>
</dbReference>
<dbReference type="GO" id="GO:2001238">
    <property type="term" value="P:positive regulation of extrinsic apoptotic signaling pathway"/>
    <property type="evidence" value="ECO:0007669"/>
    <property type="project" value="TreeGrafter"/>
</dbReference>
<dbReference type="GO" id="GO:0051092">
    <property type="term" value="P:positive regulation of NF-kappaB transcription factor activity"/>
    <property type="evidence" value="ECO:0000250"/>
    <property type="project" value="UniProtKB"/>
</dbReference>
<dbReference type="GO" id="GO:0045944">
    <property type="term" value="P:positive regulation of transcription by RNA polymerase II"/>
    <property type="evidence" value="ECO:0007669"/>
    <property type="project" value="TreeGrafter"/>
</dbReference>
<dbReference type="GO" id="GO:0065008">
    <property type="term" value="P:regulation of biological quality"/>
    <property type="evidence" value="ECO:0007669"/>
    <property type="project" value="UniProtKB-ARBA"/>
</dbReference>
<dbReference type="GO" id="GO:0050793">
    <property type="term" value="P:regulation of developmental process"/>
    <property type="evidence" value="ECO:0007669"/>
    <property type="project" value="UniProtKB-ARBA"/>
</dbReference>
<dbReference type="GO" id="GO:0051239">
    <property type="term" value="P:regulation of multicellular organismal process"/>
    <property type="evidence" value="ECO:0007669"/>
    <property type="project" value="UniProtKB-ARBA"/>
</dbReference>
<dbReference type="GO" id="GO:0051046">
    <property type="term" value="P:regulation of secretion"/>
    <property type="evidence" value="ECO:0007669"/>
    <property type="project" value="UniProtKB-ARBA"/>
</dbReference>
<dbReference type="GO" id="GO:0033209">
    <property type="term" value="P:tumor necrosis factor-mediated signaling pathway"/>
    <property type="evidence" value="ECO:0007669"/>
    <property type="project" value="TreeGrafter"/>
</dbReference>
<dbReference type="GO" id="GO:0010573">
    <property type="term" value="P:vascular endothelial growth factor production"/>
    <property type="evidence" value="ECO:0000250"/>
    <property type="project" value="UniProtKB"/>
</dbReference>
<dbReference type="CDD" id="cd00184">
    <property type="entry name" value="TNF"/>
    <property type="match status" value="1"/>
</dbReference>
<dbReference type="FunFam" id="2.60.120.40:FF:000007">
    <property type="entry name" value="Tumor necrosis factor"/>
    <property type="match status" value="1"/>
</dbReference>
<dbReference type="Gene3D" id="2.60.120.40">
    <property type="match status" value="1"/>
</dbReference>
<dbReference type="InterPro" id="IPR006053">
    <property type="entry name" value="TNF"/>
</dbReference>
<dbReference type="InterPro" id="IPR002959">
    <property type="entry name" value="TNF_alpha"/>
</dbReference>
<dbReference type="InterPro" id="IPR021184">
    <property type="entry name" value="TNF_CS"/>
</dbReference>
<dbReference type="InterPro" id="IPR006052">
    <property type="entry name" value="TNF_dom"/>
</dbReference>
<dbReference type="InterPro" id="IPR008983">
    <property type="entry name" value="Tumour_necrosis_fac-like_dom"/>
</dbReference>
<dbReference type="PANTHER" id="PTHR11471:SF23">
    <property type="entry name" value="TUMOR NECROSIS FACTOR"/>
    <property type="match status" value="1"/>
</dbReference>
<dbReference type="PANTHER" id="PTHR11471">
    <property type="entry name" value="TUMOR NECROSIS FACTOR FAMILY MEMBER"/>
    <property type="match status" value="1"/>
</dbReference>
<dbReference type="Pfam" id="PF00229">
    <property type="entry name" value="TNF"/>
    <property type="match status" value="1"/>
</dbReference>
<dbReference type="PRINTS" id="PR01234">
    <property type="entry name" value="TNECROSISFCT"/>
</dbReference>
<dbReference type="PRINTS" id="PR01235">
    <property type="entry name" value="TNFALPHA"/>
</dbReference>
<dbReference type="SMART" id="SM00207">
    <property type="entry name" value="TNF"/>
    <property type="match status" value="1"/>
</dbReference>
<dbReference type="SUPFAM" id="SSF49842">
    <property type="entry name" value="TNF-like"/>
    <property type="match status" value="1"/>
</dbReference>
<dbReference type="PROSITE" id="PS00251">
    <property type="entry name" value="THD_1"/>
    <property type="match status" value="1"/>
</dbReference>
<dbReference type="PROSITE" id="PS50049">
    <property type="entry name" value="THD_2"/>
    <property type="match status" value="1"/>
</dbReference>
<gene>
    <name type="primary">TNF</name>
    <name type="synonym">TNFA</name>
    <name type="synonym">TNFSF2</name>
</gene>
<sequence>MSTESMIRDVELAEEALSKTAGGSQGSGRCLCLSLFSFFLVAGGTTLFCLLHFGVIGPQREEFPTGYSIISPLAQTLRSSSKTSSNKPVAHVVANLSTQGQLRWLNTYANTLLANSVKLEDNQLVVPTDGLYLIYSQVLFRGQGCPSTHLFLTHTISRIAVSYPSKVNLLSAIKSPCQRETPEGAEAKPWYEPIYQGGVFQLEKGDRLSAEINLPDYLDFAKSGQVYFGIIAL</sequence>
<keyword id="KW-1003">Cell membrane</keyword>
<keyword id="KW-0202">Cytokine</keyword>
<keyword id="KW-1015">Disulfide bond</keyword>
<keyword id="KW-0325">Glycoprotein</keyword>
<keyword id="KW-0449">Lipoprotein</keyword>
<keyword id="KW-0472">Membrane</keyword>
<keyword id="KW-0519">Myristate</keyword>
<keyword id="KW-0597">Phosphoprotein</keyword>
<keyword id="KW-1185">Reference proteome</keyword>
<keyword id="KW-0964">Secreted</keyword>
<keyword id="KW-0735">Signal-anchor</keyword>
<keyword id="KW-0812">Transmembrane</keyword>
<keyword id="KW-1133">Transmembrane helix</keyword>
<proteinExistence type="evidence at transcript level"/>
<organism>
    <name type="scientific">Tursiops truncatus</name>
    <name type="common">Atlantic bottle-nosed dolphin</name>
    <name type="synonym">Delphinus truncatus</name>
    <dbReference type="NCBI Taxonomy" id="9739"/>
    <lineage>
        <taxon>Eukaryota</taxon>
        <taxon>Metazoa</taxon>
        <taxon>Chordata</taxon>
        <taxon>Craniata</taxon>
        <taxon>Vertebrata</taxon>
        <taxon>Euteleostomi</taxon>
        <taxon>Mammalia</taxon>
        <taxon>Eutheria</taxon>
        <taxon>Laurasiatheria</taxon>
        <taxon>Artiodactyla</taxon>
        <taxon>Whippomorpha</taxon>
        <taxon>Cetacea</taxon>
        <taxon>Odontoceti</taxon>
        <taxon>Delphinidae</taxon>
        <taxon>Tursiops</taxon>
    </lineage>
</organism>
<protein>
    <recommendedName>
        <fullName>Tumor necrosis factor</fullName>
    </recommendedName>
    <alternativeName>
        <fullName>Cachectin</fullName>
    </alternativeName>
    <alternativeName>
        <fullName>TNF-alpha</fullName>
    </alternativeName>
    <alternativeName>
        <fullName>Tumor necrosis factor ligand superfamily member 2</fullName>
        <shortName>TNF-a</shortName>
    </alternativeName>
    <component>
        <recommendedName>
            <fullName>Tumor necrosis factor, membrane form</fullName>
        </recommendedName>
        <alternativeName>
            <fullName>N-terminal fragment</fullName>
            <shortName>NTF</shortName>
        </alternativeName>
    </component>
    <component>
        <recommendedName>
            <fullName>Intracellular domain 1</fullName>
            <shortName>ICD1</shortName>
        </recommendedName>
    </component>
    <component>
        <recommendedName>
            <fullName>Intracellular domain 2</fullName>
            <shortName>ICD2</shortName>
        </recommendedName>
    </component>
    <component>
        <recommendedName>
            <fullName>C-domain 1</fullName>
        </recommendedName>
    </component>
    <component>
        <recommendedName>
            <fullName>C-domain 2</fullName>
        </recommendedName>
    </component>
    <component>
        <recommendedName>
            <fullName>Tumor necrosis factor, soluble form</fullName>
        </recommendedName>
    </component>
</protein>
<feature type="chain" id="PRO_0000034459" description="Tumor necrosis factor, membrane form">
    <location>
        <begin position="1"/>
        <end position="233"/>
    </location>
</feature>
<feature type="chain" id="PRO_0000417307" description="Intracellular domain 1" evidence="1">
    <location>
        <begin position="1"/>
        <end position="39"/>
    </location>
</feature>
<feature type="chain" id="PRO_0000417308" description="Intracellular domain 2" evidence="1">
    <location>
        <begin position="1"/>
        <end position="35"/>
    </location>
</feature>
<feature type="chain" id="PRO_0000417309" description="C-domain 1" evidence="1">
    <location>
        <begin position="50"/>
        <end status="unknown"/>
    </location>
</feature>
<feature type="chain" id="PRO_0000417310" description="C-domain 2" evidence="1">
    <location>
        <begin position="52"/>
        <end status="unknown"/>
    </location>
</feature>
<feature type="chain" id="PRO_0000034460" description="Tumor necrosis factor, soluble form">
    <location>
        <begin position="78"/>
        <end position="233"/>
    </location>
</feature>
<feature type="topological domain" description="Cytoplasmic" evidence="4">
    <location>
        <begin position="1"/>
        <end position="35"/>
    </location>
</feature>
<feature type="transmembrane region" description="Helical; Signal-anchor for type II membrane protein" evidence="4">
    <location>
        <begin position="36"/>
        <end position="56"/>
    </location>
</feature>
<feature type="topological domain" description="Extracellular" evidence="4">
    <location>
        <begin position="57"/>
        <end position="233"/>
    </location>
</feature>
<feature type="domain" description="THD" evidence="5">
    <location>
        <begin position="88"/>
        <end position="233"/>
    </location>
</feature>
<feature type="site" description="Cleavage; by SPPL2A or SPPL2B" evidence="1">
    <location>
        <begin position="34"/>
        <end position="35"/>
    </location>
</feature>
<feature type="site" description="Cleavage; by SPPL2A or SPPL2B" evidence="1">
    <location>
        <begin position="49"/>
        <end position="50"/>
    </location>
</feature>
<feature type="site" description="Cleavage; by SPPL2A or SPPL2B" evidence="1">
    <location>
        <begin position="51"/>
        <end position="52"/>
    </location>
</feature>
<feature type="site" description="Cleavage; by ADAM17" evidence="1">
    <location>
        <begin position="77"/>
        <end position="78"/>
    </location>
</feature>
<feature type="modified residue" description="Phosphoserine; by CK1" evidence="1">
    <location>
        <position position="2"/>
    </location>
</feature>
<feature type="lipid moiety-binding region" description="N6-myristoyl lysine" evidence="2">
    <location>
        <position position="19"/>
    </location>
</feature>
<feature type="glycosylation site" description="O-linked (GalNAc...) serine; in soluble form" evidence="1">
    <location>
        <position position="80"/>
    </location>
</feature>
<feature type="glycosylation site" description="N-linked (GlcNAc...) asparagine" evidence="4">
    <location>
        <position position="95"/>
    </location>
</feature>
<feature type="disulfide bond" evidence="5">
    <location>
        <begin position="145"/>
        <end position="177"/>
    </location>
</feature>
<reference key="1">
    <citation type="journal article" date="2001" name="Vet. Immunol. Immunopathol.">
        <title>Molecular cloning and functional characterization of bottlenose dolphin (Tursiops truncatus) tumor necrosis factor alpha.</title>
        <authorList>
            <person name="Shoji Y."/>
            <person name="Inoue Y."/>
            <person name="Sugisawa H."/>
            <person name="Itou T."/>
            <person name="Endo T."/>
            <person name="Sakai T."/>
        </authorList>
    </citation>
    <scope>NUCLEOTIDE SEQUENCE [MRNA]</scope>
</reference>
<name>TNFA_TURTR</name>